<reference key="1">
    <citation type="journal article" date="1998" name="Nature">
        <title>Deciphering the biology of Mycobacterium tuberculosis from the complete genome sequence.</title>
        <authorList>
            <person name="Cole S.T."/>
            <person name="Brosch R."/>
            <person name="Parkhill J."/>
            <person name="Garnier T."/>
            <person name="Churcher C.M."/>
            <person name="Harris D.E."/>
            <person name="Gordon S.V."/>
            <person name="Eiglmeier K."/>
            <person name="Gas S."/>
            <person name="Barry C.E. III"/>
            <person name="Tekaia F."/>
            <person name="Badcock K."/>
            <person name="Basham D."/>
            <person name="Brown D."/>
            <person name="Chillingworth T."/>
            <person name="Connor R."/>
            <person name="Davies R.M."/>
            <person name="Devlin K."/>
            <person name="Feltwell T."/>
            <person name="Gentles S."/>
            <person name="Hamlin N."/>
            <person name="Holroyd S."/>
            <person name="Hornsby T."/>
            <person name="Jagels K."/>
            <person name="Krogh A."/>
            <person name="McLean J."/>
            <person name="Moule S."/>
            <person name="Murphy L.D."/>
            <person name="Oliver S."/>
            <person name="Osborne J."/>
            <person name="Quail M.A."/>
            <person name="Rajandream M.A."/>
            <person name="Rogers J."/>
            <person name="Rutter S."/>
            <person name="Seeger K."/>
            <person name="Skelton S."/>
            <person name="Squares S."/>
            <person name="Squares R."/>
            <person name="Sulston J.E."/>
            <person name="Taylor K."/>
            <person name="Whitehead S."/>
            <person name="Barrell B.G."/>
        </authorList>
    </citation>
    <scope>NUCLEOTIDE SEQUENCE [LARGE SCALE GENOMIC DNA]</scope>
    <source>
        <strain>ATCC 25618 / H37Rv</strain>
    </source>
</reference>
<reference key="2">
    <citation type="journal article" date="2011" name="Mol. Cell. Proteomics">
        <title>Proteogenomic analysis of Mycobacterium tuberculosis by high resolution mass spectrometry.</title>
        <authorList>
            <person name="Kelkar D.S."/>
            <person name="Kumar D."/>
            <person name="Kumar P."/>
            <person name="Balakrishnan L."/>
            <person name="Muthusamy B."/>
            <person name="Yadav A.K."/>
            <person name="Shrivastava P."/>
            <person name="Marimuthu A."/>
            <person name="Anand S."/>
            <person name="Sundaram H."/>
            <person name="Kingsbury R."/>
            <person name="Harsha H.C."/>
            <person name="Nair B."/>
            <person name="Prasad T.S."/>
            <person name="Chauhan D.S."/>
            <person name="Katoch K."/>
            <person name="Katoch V.M."/>
            <person name="Kumar P."/>
            <person name="Chaerkady R."/>
            <person name="Ramachandran S."/>
            <person name="Dash D."/>
            <person name="Pandey A."/>
        </authorList>
    </citation>
    <scope>IDENTIFICATION BY MASS SPECTROMETRY [LARGE SCALE ANALYSIS]</scope>
    <source>
        <strain>ATCC 25618 / H37Rv</strain>
    </source>
</reference>
<organism>
    <name type="scientific">Mycobacterium tuberculosis (strain ATCC 25618 / H37Rv)</name>
    <dbReference type="NCBI Taxonomy" id="83332"/>
    <lineage>
        <taxon>Bacteria</taxon>
        <taxon>Bacillati</taxon>
        <taxon>Actinomycetota</taxon>
        <taxon>Actinomycetes</taxon>
        <taxon>Mycobacteriales</taxon>
        <taxon>Mycobacteriaceae</taxon>
        <taxon>Mycobacterium</taxon>
        <taxon>Mycobacterium tuberculosis complex</taxon>
    </lineage>
</organism>
<accession>P9WL75</accession>
<accession>L0TBQ2</accession>
<accession>P65025</accession>
<accession>Q50633</accession>
<feature type="chain" id="PRO_0000014139" description="Sec translocon accessory complex subunit YajC">
    <location>
        <begin position="1"/>
        <end position="115"/>
    </location>
</feature>
<feature type="transmembrane region" description="Helical" evidence="2">
    <location>
        <begin position="1"/>
        <end position="21"/>
    </location>
</feature>
<feature type="region of interest" description="Disordered" evidence="3">
    <location>
        <begin position="96"/>
        <end position="115"/>
    </location>
</feature>
<feature type="compositionally biased region" description="Acidic residues" evidence="3">
    <location>
        <begin position="96"/>
        <end position="105"/>
    </location>
</feature>
<feature type="compositionally biased region" description="Basic and acidic residues" evidence="3">
    <location>
        <begin position="106"/>
        <end position="115"/>
    </location>
</feature>
<keyword id="KW-1003">Cell membrane</keyword>
<keyword id="KW-0472">Membrane</keyword>
<keyword id="KW-0653">Protein transport</keyword>
<keyword id="KW-1185">Reference proteome</keyword>
<keyword id="KW-0811">Translocation</keyword>
<keyword id="KW-0812">Transmembrane</keyword>
<keyword id="KW-1133">Transmembrane helix</keyword>
<keyword id="KW-0813">Transport</keyword>
<comment type="function">
    <text evidence="1">The SecYEG-SecDF-YajC-YidC holo-translocon (HTL) protein secretase/insertase is a supercomplex required for protein secretion, insertion of proteins into membranes, and assembly of membrane protein complexes. While the SecYEG complex is essential for assembly of a number of proteins and complexes, the SecDF-YajC-YidC subcomplex facilitates these functions.</text>
</comment>
<comment type="subunit">
    <text evidence="1">Part of the SecDF-YidC-YajC translocase complex. The SecDF-YidC-YajC translocase forms a supercomplex with SecYEG, called the holo-translocon (HTL).</text>
</comment>
<comment type="subcellular location">
    <subcellularLocation>
        <location evidence="2">Cell membrane</location>
        <topology evidence="2">Single-pass membrane protein</topology>
    </subcellularLocation>
</comment>
<comment type="similarity">
    <text evidence="4">Belongs to the YajC family.</text>
</comment>
<proteinExistence type="evidence at protein level"/>
<protein>
    <recommendedName>
        <fullName>Sec translocon accessory complex subunit YajC</fullName>
    </recommendedName>
</protein>
<gene>
    <name type="primary">yajC</name>
    <name type="ordered locus">Rv2588c</name>
    <name type="ORF">MTCY227.13</name>
</gene>
<name>YAJC_MYCTU</name>
<sequence length="115" mass="12967">MESFVLFLPFLLIMGGFMYFASRRQRRAMQATIDLHDSLQPGERVHTTSGLEATIVAIADDTIDLEIAPGVVTTWMKLAIRDRILPDDDIDEELNEDLDKDVDDVAGERRVTNDS</sequence>
<evidence type="ECO:0000250" key="1">
    <source>
        <dbReference type="UniProtKB" id="P0ADZ7"/>
    </source>
</evidence>
<evidence type="ECO:0000255" key="2"/>
<evidence type="ECO:0000256" key="3">
    <source>
        <dbReference type="SAM" id="MobiDB-lite"/>
    </source>
</evidence>
<evidence type="ECO:0000305" key="4"/>
<dbReference type="EMBL" id="AL123456">
    <property type="protein sequence ID" value="CCP45384.1"/>
    <property type="molecule type" value="Genomic_DNA"/>
</dbReference>
<dbReference type="PIR" id="C70726">
    <property type="entry name" value="C70726"/>
</dbReference>
<dbReference type="RefSeq" id="NP_217104.1">
    <property type="nucleotide sequence ID" value="NC_000962.3"/>
</dbReference>
<dbReference type="RefSeq" id="WP_003413391.1">
    <property type="nucleotide sequence ID" value="NZ_NVQJ01000023.1"/>
</dbReference>
<dbReference type="SMR" id="P9WL75"/>
<dbReference type="FunCoup" id="P9WL75">
    <property type="interactions" value="23"/>
</dbReference>
<dbReference type="STRING" id="83332.Rv2588c"/>
<dbReference type="PaxDb" id="83332-Rv2588c"/>
<dbReference type="DNASU" id="887346"/>
<dbReference type="GeneID" id="45426590"/>
<dbReference type="GeneID" id="887346"/>
<dbReference type="KEGG" id="mtu:Rv2588c"/>
<dbReference type="KEGG" id="mtv:RVBD_2588c"/>
<dbReference type="TubercuList" id="Rv2588c"/>
<dbReference type="eggNOG" id="COG1862">
    <property type="taxonomic scope" value="Bacteria"/>
</dbReference>
<dbReference type="InParanoid" id="P9WL75"/>
<dbReference type="OrthoDB" id="2200301at2"/>
<dbReference type="PhylomeDB" id="P9WL75"/>
<dbReference type="Proteomes" id="UP000001584">
    <property type="component" value="Chromosome"/>
</dbReference>
<dbReference type="GO" id="GO:0005886">
    <property type="term" value="C:plasma membrane"/>
    <property type="evidence" value="ECO:0007005"/>
    <property type="project" value="MTBBASE"/>
</dbReference>
<dbReference type="GO" id="GO:0015031">
    <property type="term" value="P:protein transport"/>
    <property type="evidence" value="ECO:0007669"/>
    <property type="project" value="UniProtKB-KW"/>
</dbReference>
<dbReference type="InterPro" id="IPR003849">
    <property type="entry name" value="Preprotein_translocase_YajC"/>
</dbReference>
<dbReference type="NCBIfam" id="TIGR00739">
    <property type="entry name" value="yajC"/>
    <property type="match status" value="1"/>
</dbReference>
<dbReference type="PANTHER" id="PTHR33909">
    <property type="entry name" value="SEC TRANSLOCON ACCESSORY COMPLEX SUBUNIT YAJC"/>
    <property type="match status" value="1"/>
</dbReference>
<dbReference type="PANTHER" id="PTHR33909:SF1">
    <property type="entry name" value="SEC TRANSLOCON ACCESSORY COMPLEX SUBUNIT YAJC"/>
    <property type="match status" value="1"/>
</dbReference>
<dbReference type="Pfam" id="PF02699">
    <property type="entry name" value="YajC"/>
    <property type="match status" value="1"/>
</dbReference>
<dbReference type="SMART" id="SM01323">
    <property type="entry name" value="YajC"/>
    <property type="match status" value="1"/>
</dbReference>